<name>HFLD_SODGM</name>
<sequence length="209" mass="22969">MAKNYFDITLALAGVCQSARLVQQLAHQSQCDEPPLRVSLQSLLDLNPPSVRAVYGDNPANLRMGLETLQNVLNASSREGLGAELTWYTLGLIVLERKLNGNRGAQAELSRRIDALDRQLSHFDLLSDTLISAMASIYVDIISPLGPRIQVTGAPVVLQNTQIQAKVRAVLLAGIRSAVLWQQVGGGRFQLMFARNRLFKKAKQILSHT</sequence>
<dbReference type="EMBL" id="AP008232">
    <property type="protein sequence ID" value="BAE74359.1"/>
    <property type="molecule type" value="Genomic_DNA"/>
</dbReference>
<dbReference type="RefSeq" id="WP_011410944.1">
    <property type="nucleotide sequence ID" value="NC_007712.1"/>
</dbReference>
<dbReference type="SMR" id="Q2NU16"/>
<dbReference type="STRING" id="343509.SG1084"/>
<dbReference type="KEGG" id="sgl:SG1084"/>
<dbReference type="eggNOG" id="COG2915">
    <property type="taxonomic scope" value="Bacteria"/>
</dbReference>
<dbReference type="HOGENOM" id="CLU_098920_0_0_6"/>
<dbReference type="OrthoDB" id="9788031at2"/>
<dbReference type="BioCyc" id="SGLO343509:SGP1_RS09290-MONOMER"/>
<dbReference type="Proteomes" id="UP000001932">
    <property type="component" value="Chromosome"/>
</dbReference>
<dbReference type="GO" id="GO:0005737">
    <property type="term" value="C:cytoplasm"/>
    <property type="evidence" value="ECO:0007669"/>
    <property type="project" value="UniProtKB-SubCell"/>
</dbReference>
<dbReference type="GO" id="GO:0005886">
    <property type="term" value="C:plasma membrane"/>
    <property type="evidence" value="ECO:0007669"/>
    <property type="project" value="UniProtKB-SubCell"/>
</dbReference>
<dbReference type="FunFam" id="1.10.3890.10:FF:000001">
    <property type="entry name" value="High frequency lysogenization protein HflD homolog"/>
    <property type="match status" value="1"/>
</dbReference>
<dbReference type="Gene3D" id="1.10.3890.10">
    <property type="entry name" value="HflD-like"/>
    <property type="match status" value="1"/>
</dbReference>
<dbReference type="HAMAP" id="MF_00695">
    <property type="entry name" value="HflD_protein"/>
    <property type="match status" value="1"/>
</dbReference>
<dbReference type="InterPro" id="IPR007451">
    <property type="entry name" value="HflD"/>
</dbReference>
<dbReference type="InterPro" id="IPR035932">
    <property type="entry name" value="HflD-like_sf"/>
</dbReference>
<dbReference type="NCBIfam" id="NF001246">
    <property type="entry name" value="PRK00218.1-2"/>
    <property type="match status" value="1"/>
</dbReference>
<dbReference type="NCBIfam" id="NF001248">
    <property type="entry name" value="PRK00218.1-4"/>
    <property type="match status" value="1"/>
</dbReference>
<dbReference type="NCBIfam" id="NF001249">
    <property type="entry name" value="PRK00218.1-5"/>
    <property type="match status" value="1"/>
</dbReference>
<dbReference type="PANTHER" id="PTHR38100">
    <property type="entry name" value="HIGH FREQUENCY LYSOGENIZATION PROTEIN HFLD"/>
    <property type="match status" value="1"/>
</dbReference>
<dbReference type="PANTHER" id="PTHR38100:SF1">
    <property type="entry name" value="HIGH FREQUENCY LYSOGENIZATION PROTEIN HFLD"/>
    <property type="match status" value="1"/>
</dbReference>
<dbReference type="Pfam" id="PF04356">
    <property type="entry name" value="DUF489"/>
    <property type="match status" value="1"/>
</dbReference>
<dbReference type="SUPFAM" id="SSF101322">
    <property type="entry name" value="YcfC-like"/>
    <property type="match status" value="1"/>
</dbReference>
<evidence type="ECO:0000255" key="1">
    <source>
        <dbReference type="HAMAP-Rule" id="MF_00695"/>
    </source>
</evidence>
<feature type="chain" id="PRO_1000045450" description="High frequency lysogenization protein HflD homolog">
    <location>
        <begin position="1"/>
        <end position="209"/>
    </location>
</feature>
<gene>
    <name evidence="1" type="primary">hflD</name>
    <name type="ordered locus">SG1084</name>
</gene>
<reference key="1">
    <citation type="journal article" date="2006" name="Genome Res.">
        <title>Massive genome erosion and functional adaptations provide insights into the symbiotic lifestyle of Sodalis glossinidius in the tsetse host.</title>
        <authorList>
            <person name="Toh H."/>
            <person name="Weiss B.L."/>
            <person name="Perkin S.A.H."/>
            <person name="Yamashita A."/>
            <person name="Oshima K."/>
            <person name="Hattori M."/>
            <person name="Aksoy S."/>
        </authorList>
    </citation>
    <scope>NUCLEOTIDE SEQUENCE [LARGE SCALE GENOMIC DNA]</scope>
    <source>
        <strain>morsitans</strain>
    </source>
</reference>
<proteinExistence type="inferred from homology"/>
<keyword id="KW-0997">Cell inner membrane</keyword>
<keyword id="KW-1003">Cell membrane</keyword>
<keyword id="KW-0963">Cytoplasm</keyword>
<keyword id="KW-0472">Membrane</keyword>
<organism>
    <name type="scientific">Sodalis glossinidius (strain morsitans)</name>
    <dbReference type="NCBI Taxonomy" id="343509"/>
    <lineage>
        <taxon>Bacteria</taxon>
        <taxon>Pseudomonadati</taxon>
        <taxon>Pseudomonadota</taxon>
        <taxon>Gammaproteobacteria</taxon>
        <taxon>Enterobacterales</taxon>
        <taxon>Bruguierivoracaceae</taxon>
        <taxon>Sodalis</taxon>
    </lineage>
</organism>
<accession>Q2NU16</accession>
<protein>
    <recommendedName>
        <fullName evidence="1">High frequency lysogenization protein HflD homolog</fullName>
    </recommendedName>
</protein>
<comment type="subcellular location">
    <subcellularLocation>
        <location>Cytoplasm</location>
    </subcellularLocation>
    <subcellularLocation>
        <location evidence="1">Cell inner membrane</location>
        <topology evidence="1">Peripheral membrane protein</topology>
        <orientation evidence="1">Cytoplasmic side</orientation>
    </subcellularLocation>
</comment>
<comment type="similarity">
    <text evidence="1">Belongs to the HflD family.</text>
</comment>